<organism>
    <name type="scientific">Acidothermus cellulolyticus (strain ATCC 43068 / DSM 8971 / 11B)</name>
    <dbReference type="NCBI Taxonomy" id="351607"/>
    <lineage>
        <taxon>Bacteria</taxon>
        <taxon>Bacillati</taxon>
        <taxon>Actinomycetota</taxon>
        <taxon>Actinomycetes</taxon>
        <taxon>Acidothermales</taxon>
        <taxon>Acidothermaceae</taxon>
        <taxon>Acidothermus</taxon>
    </lineage>
</organism>
<keyword id="KW-1185">Reference proteome</keyword>
<keyword id="KW-0687">Ribonucleoprotein</keyword>
<keyword id="KW-0689">Ribosomal protein</keyword>
<keyword id="KW-0694">RNA-binding</keyword>
<keyword id="KW-0699">rRNA-binding</keyword>
<keyword id="KW-0820">tRNA-binding</keyword>
<sequence>MLIPRKVKHRKQHHPKRSGVAKGGTRVVFGEYGIQALEPAYVTNRQIESARIAMTRHIRRGGKVWITIFPDRPLTKKPAETRMGSGKGSPEWWVANVKPGRVMFELAGVPEPVAREALRRAMHKLPMKCRFVRREVEVS</sequence>
<evidence type="ECO:0000255" key="1">
    <source>
        <dbReference type="HAMAP-Rule" id="MF_01342"/>
    </source>
</evidence>
<evidence type="ECO:0000256" key="2">
    <source>
        <dbReference type="SAM" id="MobiDB-lite"/>
    </source>
</evidence>
<evidence type="ECO:0000305" key="3"/>
<name>RL16_ACIC1</name>
<dbReference type="EMBL" id="CP000481">
    <property type="protein sequence ID" value="ABK52087.1"/>
    <property type="molecule type" value="Genomic_DNA"/>
</dbReference>
<dbReference type="RefSeq" id="WP_011719150.1">
    <property type="nucleotide sequence ID" value="NC_008578.1"/>
</dbReference>
<dbReference type="SMR" id="A0LRM7"/>
<dbReference type="FunCoup" id="A0LRM7">
    <property type="interactions" value="306"/>
</dbReference>
<dbReference type="STRING" id="351607.Acel_0313"/>
<dbReference type="KEGG" id="ace:Acel_0313"/>
<dbReference type="eggNOG" id="COG0197">
    <property type="taxonomic scope" value="Bacteria"/>
</dbReference>
<dbReference type="HOGENOM" id="CLU_078858_2_1_11"/>
<dbReference type="InParanoid" id="A0LRM7"/>
<dbReference type="OrthoDB" id="9802589at2"/>
<dbReference type="Proteomes" id="UP000008221">
    <property type="component" value="Chromosome"/>
</dbReference>
<dbReference type="GO" id="GO:0022625">
    <property type="term" value="C:cytosolic large ribosomal subunit"/>
    <property type="evidence" value="ECO:0007669"/>
    <property type="project" value="TreeGrafter"/>
</dbReference>
<dbReference type="GO" id="GO:0019843">
    <property type="term" value="F:rRNA binding"/>
    <property type="evidence" value="ECO:0007669"/>
    <property type="project" value="UniProtKB-UniRule"/>
</dbReference>
<dbReference type="GO" id="GO:0003735">
    <property type="term" value="F:structural constituent of ribosome"/>
    <property type="evidence" value="ECO:0007669"/>
    <property type="project" value="InterPro"/>
</dbReference>
<dbReference type="GO" id="GO:0000049">
    <property type="term" value="F:tRNA binding"/>
    <property type="evidence" value="ECO:0007669"/>
    <property type="project" value="UniProtKB-KW"/>
</dbReference>
<dbReference type="GO" id="GO:0006412">
    <property type="term" value="P:translation"/>
    <property type="evidence" value="ECO:0007669"/>
    <property type="project" value="UniProtKB-UniRule"/>
</dbReference>
<dbReference type="CDD" id="cd01433">
    <property type="entry name" value="Ribosomal_L16_L10e"/>
    <property type="match status" value="1"/>
</dbReference>
<dbReference type="FunFam" id="3.90.1170.10:FF:000001">
    <property type="entry name" value="50S ribosomal protein L16"/>
    <property type="match status" value="1"/>
</dbReference>
<dbReference type="Gene3D" id="3.90.1170.10">
    <property type="entry name" value="Ribosomal protein L10e/L16"/>
    <property type="match status" value="1"/>
</dbReference>
<dbReference type="HAMAP" id="MF_01342">
    <property type="entry name" value="Ribosomal_uL16"/>
    <property type="match status" value="1"/>
</dbReference>
<dbReference type="InterPro" id="IPR047873">
    <property type="entry name" value="Ribosomal_uL16"/>
</dbReference>
<dbReference type="InterPro" id="IPR000114">
    <property type="entry name" value="Ribosomal_uL16_bact-type"/>
</dbReference>
<dbReference type="InterPro" id="IPR020798">
    <property type="entry name" value="Ribosomal_uL16_CS"/>
</dbReference>
<dbReference type="InterPro" id="IPR016180">
    <property type="entry name" value="Ribosomal_uL16_dom"/>
</dbReference>
<dbReference type="InterPro" id="IPR036920">
    <property type="entry name" value="Ribosomal_uL16_sf"/>
</dbReference>
<dbReference type="NCBIfam" id="TIGR01164">
    <property type="entry name" value="rplP_bact"/>
    <property type="match status" value="1"/>
</dbReference>
<dbReference type="PANTHER" id="PTHR12220">
    <property type="entry name" value="50S/60S RIBOSOMAL PROTEIN L16"/>
    <property type="match status" value="1"/>
</dbReference>
<dbReference type="PANTHER" id="PTHR12220:SF13">
    <property type="entry name" value="LARGE RIBOSOMAL SUBUNIT PROTEIN UL16M"/>
    <property type="match status" value="1"/>
</dbReference>
<dbReference type="Pfam" id="PF00252">
    <property type="entry name" value="Ribosomal_L16"/>
    <property type="match status" value="1"/>
</dbReference>
<dbReference type="PRINTS" id="PR00060">
    <property type="entry name" value="RIBOSOMALL16"/>
</dbReference>
<dbReference type="SUPFAM" id="SSF54686">
    <property type="entry name" value="Ribosomal protein L16p/L10e"/>
    <property type="match status" value="1"/>
</dbReference>
<dbReference type="PROSITE" id="PS00701">
    <property type="entry name" value="RIBOSOMAL_L16_2"/>
    <property type="match status" value="1"/>
</dbReference>
<protein>
    <recommendedName>
        <fullName evidence="1">Large ribosomal subunit protein uL16</fullName>
    </recommendedName>
    <alternativeName>
        <fullName evidence="3">50S ribosomal protein L16</fullName>
    </alternativeName>
</protein>
<gene>
    <name evidence="1" type="primary">rplP</name>
    <name type="ordered locus">Acel_0313</name>
</gene>
<comment type="function">
    <text evidence="1">Binds 23S rRNA and is also seen to make contacts with the A and possibly P site tRNAs.</text>
</comment>
<comment type="subunit">
    <text evidence="1">Part of the 50S ribosomal subunit.</text>
</comment>
<comment type="similarity">
    <text evidence="1">Belongs to the universal ribosomal protein uL16 family.</text>
</comment>
<reference key="1">
    <citation type="journal article" date="2009" name="Genome Res.">
        <title>Complete genome of the cellulolytic thermophile Acidothermus cellulolyticus 11B provides insights into its ecophysiological and evolutionary adaptations.</title>
        <authorList>
            <person name="Barabote R.D."/>
            <person name="Xie G."/>
            <person name="Leu D.H."/>
            <person name="Normand P."/>
            <person name="Necsulea A."/>
            <person name="Daubin V."/>
            <person name="Medigue C."/>
            <person name="Adney W.S."/>
            <person name="Xu X.C."/>
            <person name="Lapidus A."/>
            <person name="Parales R.E."/>
            <person name="Detter C."/>
            <person name="Pujic P."/>
            <person name="Bruce D."/>
            <person name="Lavire C."/>
            <person name="Challacombe J.F."/>
            <person name="Brettin T.S."/>
            <person name="Berry A.M."/>
        </authorList>
    </citation>
    <scope>NUCLEOTIDE SEQUENCE [LARGE SCALE GENOMIC DNA]</scope>
    <source>
        <strain>ATCC 43068 / DSM 8971 / 11B</strain>
    </source>
</reference>
<accession>A0LRM7</accession>
<proteinExistence type="inferred from homology"/>
<feature type="chain" id="PRO_1000054568" description="Large ribosomal subunit protein uL16">
    <location>
        <begin position="1"/>
        <end position="139"/>
    </location>
</feature>
<feature type="region of interest" description="Disordered" evidence="2">
    <location>
        <begin position="1"/>
        <end position="22"/>
    </location>
</feature>
<feature type="compositionally biased region" description="Basic residues" evidence="2">
    <location>
        <begin position="1"/>
        <end position="19"/>
    </location>
</feature>